<organism>
    <name type="scientific">Anopheles gambiae</name>
    <name type="common">African malaria mosquito</name>
    <dbReference type="NCBI Taxonomy" id="7165"/>
    <lineage>
        <taxon>Eukaryota</taxon>
        <taxon>Metazoa</taxon>
        <taxon>Ecdysozoa</taxon>
        <taxon>Arthropoda</taxon>
        <taxon>Hexapoda</taxon>
        <taxon>Insecta</taxon>
        <taxon>Pterygota</taxon>
        <taxon>Neoptera</taxon>
        <taxon>Endopterygota</taxon>
        <taxon>Diptera</taxon>
        <taxon>Nematocera</taxon>
        <taxon>Culicoidea</taxon>
        <taxon>Culicidae</taxon>
        <taxon>Anophelinae</taxon>
        <taxon>Anopheles</taxon>
    </lineage>
</organism>
<gene>
    <name type="ORF">AGAP006130</name>
</gene>
<reference key="1">
    <citation type="journal article" date="2002" name="Science">
        <title>The genome sequence of the malaria mosquito Anopheles gambiae.</title>
        <authorList>
            <person name="Holt R.A."/>
            <person name="Subramanian G.M."/>
            <person name="Halpern A."/>
            <person name="Sutton G.G."/>
            <person name="Charlab R."/>
            <person name="Nusskern D.R."/>
            <person name="Wincker P."/>
            <person name="Clark A.G."/>
            <person name="Ribeiro J.M.C."/>
            <person name="Wides R."/>
            <person name="Salzberg S.L."/>
            <person name="Loftus B.J."/>
            <person name="Yandell M.D."/>
            <person name="Majoros W.H."/>
            <person name="Rusch D.B."/>
            <person name="Lai Z."/>
            <person name="Kraft C.L."/>
            <person name="Abril J.F."/>
            <person name="Anthouard V."/>
            <person name="Arensburger P."/>
            <person name="Atkinson P.W."/>
            <person name="Baden H."/>
            <person name="de Berardinis V."/>
            <person name="Baldwin D."/>
            <person name="Benes V."/>
            <person name="Biedler J."/>
            <person name="Blass C."/>
            <person name="Bolanos R."/>
            <person name="Boscus D."/>
            <person name="Barnstead M."/>
            <person name="Cai S."/>
            <person name="Center A."/>
            <person name="Chaturverdi K."/>
            <person name="Christophides G.K."/>
            <person name="Chrystal M.A.M."/>
            <person name="Clamp M."/>
            <person name="Cravchik A."/>
            <person name="Curwen V."/>
            <person name="Dana A."/>
            <person name="Delcher A."/>
            <person name="Dew I."/>
            <person name="Evans C.A."/>
            <person name="Flanigan M."/>
            <person name="Grundschober-Freimoser A."/>
            <person name="Friedli L."/>
            <person name="Gu Z."/>
            <person name="Guan P."/>
            <person name="Guigo R."/>
            <person name="Hillenmeyer M.E."/>
            <person name="Hladun S.L."/>
            <person name="Hogan J.R."/>
            <person name="Hong Y.S."/>
            <person name="Hoover J."/>
            <person name="Jaillon O."/>
            <person name="Ke Z."/>
            <person name="Kodira C.D."/>
            <person name="Kokoza E."/>
            <person name="Koutsos A."/>
            <person name="Letunic I."/>
            <person name="Levitsky A.A."/>
            <person name="Liang Y."/>
            <person name="Lin J.-J."/>
            <person name="Lobo N.F."/>
            <person name="Lopez J.R."/>
            <person name="Malek J.A."/>
            <person name="McIntosh T.C."/>
            <person name="Meister S."/>
            <person name="Miller J.R."/>
            <person name="Mobarry C."/>
            <person name="Mongin E."/>
            <person name="Murphy S.D."/>
            <person name="O'Brochta D.A."/>
            <person name="Pfannkoch C."/>
            <person name="Qi R."/>
            <person name="Regier M.A."/>
            <person name="Remington K."/>
            <person name="Shao H."/>
            <person name="Sharakhova M.V."/>
            <person name="Sitter C.D."/>
            <person name="Shetty J."/>
            <person name="Smith T.J."/>
            <person name="Strong R."/>
            <person name="Sun J."/>
            <person name="Thomasova D."/>
            <person name="Ton L.Q."/>
            <person name="Topalis P."/>
            <person name="Tu Z.J."/>
            <person name="Unger M.F."/>
            <person name="Walenz B."/>
            <person name="Wang A.H."/>
            <person name="Wang J."/>
            <person name="Wang M."/>
            <person name="Wang X."/>
            <person name="Woodford K.J."/>
            <person name="Wortman J.R."/>
            <person name="Wu M."/>
            <person name="Yao A."/>
            <person name="Zdobnov E.M."/>
            <person name="Zhang H."/>
            <person name="Zhao Q."/>
            <person name="Zhao S."/>
            <person name="Zhu S.C."/>
            <person name="Zhimulev I."/>
            <person name="Coluzzi M."/>
            <person name="della Torre A."/>
            <person name="Roth C.W."/>
            <person name="Louis C."/>
            <person name="Kalush F."/>
            <person name="Mural R.J."/>
            <person name="Myers E.W."/>
            <person name="Adams M.D."/>
            <person name="Smith H.O."/>
            <person name="Broder S."/>
            <person name="Gardner M.J."/>
            <person name="Fraser C.M."/>
            <person name="Birney E."/>
            <person name="Bork P."/>
            <person name="Brey P.T."/>
            <person name="Venter J.C."/>
            <person name="Weissenbach J."/>
            <person name="Kafatos F.C."/>
            <person name="Collins F.H."/>
            <person name="Hoffman S.L."/>
        </authorList>
    </citation>
    <scope>NUCLEOTIDE SEQUENCE [LARGE SCALE GENOMIC DNA]</scope>
    <source>
        <strain>PEST</strain>
    </source>
</reference>
<protein>
    <recommendedName>
        <fullName evidence="1">Eukaryotic translation initiation factor 3 subunit L</fullName>
        <shortName evidence="1">eIF3l</shortName>
    </recommendedName>
</protein>
<accession>Q7Q5Y8</accession>
<evidence type="ECO:0000255" key="1">
    <source>
        <dbReference type="HAMAP-Rule" id="MF_03011"/>
    </source>
</evidence>
<evidence type="ECO:0000255" key="2">
    <source>
        <dbReference type="PROSITE-ProRule" id="PRU01185"/>
    </source>
</evidence>
<feature type="chain" id="PRO_0000364240" description="Eukaryotic translation initiation factor 3 subunit L">
    <location>
        <begin position="1"/>
        <end position="539"/>
    </location>
</feature>
<feature type="domain" description="PCI" evidence="2">
    <location>
        <begin position="302"/>
        <end position="514"/>
    </location>
</feature>
<comment type="function">
    <text evidence="1">Component of the eukaryotic translation initiation factor 3 (eIF-3) complex, which is involved in protein synthesis of a specialized repertoire of mRNAs and, together with other initiation factors, stimulates binding of mRNA and methionyl-tRNAi to the 40S ribosome. The eIF-3 complex specifically targets and initiates translation of a subset of mRNAs involved in cell proliferation.</text>
</comment>
<comment type="subunit">
    <text evidence="1">Component of the eukaryotic translation initiation factor 3 (eIF-3) complex.</text>
</comment>
<comment type="subcellular location">
    <subcellularLocation>
        <location evidence="1">Cytoplasm</location>
    </subcellularLocation>
</comment>
<comment type="similarity">
    <text evidence="1">Belongs to the eIF-3 subunit L family.</text>
</comment>
<dbReference type="EMBL" id="AAAB01008960">
    <property type="protein sequence ID" value="EAA10850.3"/>
    <property type="molecule type" value="Genomic_DNA"/>
</dbReference>
<dbReference type="SMR" id="Q7Q5Y8"/>
<dbReference type="FunCoup" id="Q7Q5Y8">
    <property type="interactions" value="2111"/>
</dbReference>
<dbReference type="STRING" id="7165.Q7Q5Y8"/>
<dbReference type="PaxDb" id="7165-AGAP006130-PA"/>
<dbReference type="EnsemblMetazoa" id="AGAP006130-RA">
    <property type="protein sequence ID" value="AGAP006130-PA"/>
    <property type="gene ID" value="AGAP006130"/>
</dbReference>
<dbReference type="GeneID" id="1276800"/>
<dbReference type="KEGG" id="aga:1276800"/>
<dbReference type="CTD" id="51386"/>
<dbReference type="VEuPathDB" id="VectorBase:AGAMI1_008690"/>
<dbReference type="VEuPathDB" id="VectorBase:AGAP006130"/>
<dbReference type="eggNOG" id="KOG3677">
    <property type="taxonomic scope" value="Eukaryota"/>
</dbReference>
<dbReference type="HOGENOM" id="CLU_029210_0_1_1"/>
<dbReference type="InParanoid" id="Q7Q5Y8"/>
<dbReference type="OMA" id="AGWFIRN"/>
<dbReference type="PhylomeDB" id="Q7Q5Y8"/>
<dbReference type="Proteomes" id="UP000007062">
    <property type="component" value="Chromosome 2L"/>
</dbReference>
<dbReference type="GO" id="GO:0016282">
    <property type="term" value="C:eukaryotic 43S preinitiation complex"/>
    <property type="evidence" value="ECO:0007669"/>
    <property type="project" value="UniProtKB-UniRule"/>
</dbReference>
<dbReference type="GO" id="GO:0033290">
    <property type="term" value="C:eukaryotic 48S preinitiation complex"/>
    <property type="evidence" value="ECO:0007669"/>
    <property type="project" value="UniProtKB-UniRule"/>
</dbReference>
<dbReference type="GO" id="GO:0005852">
    <property type="term" value="C:eukaryotic translation initiation factor 3 complex"/>
    <property type="evidence" value="ECO:0000318"/>
    <property type="project" value="GO_Central"/>
</dbReference>
<dbReference type="GO" id="GO:0003743">
    <property type="term" value="F:translation initiation factor activity"/>
    <property type="evidence" value="ECO:0007669"/>
    <property type="project" value="UniProtKB-UniRule"/>
</dbReference>
<dbReference type="GO" id="GO:0001732">
    <property type="term" value="P:formation of cytoplasmic translation initiation complex"/>
    <property type="evidence" value="ECO:0007669"/>
    <property type="project" value="UniProtKB-UniRule"/>
</dbReference>
<dbReference type="GO" id="GO:0006413">
    <property type="term" value="P:translational initiation"/>
    <property type="evidence" value="ECO:0000318"/>
    <property type="project" value="GO_Central"/>
</dbReference>
<dbReference type="HAMAP" id="MF_03011">
    <property type="entry name" value="eIF3l"/>
    <property type="match status" value="1"/>
</dbReference>
<dbReference type="InterPro" id="IPR019382">
    <property type="entry name" value="eIF3l"/>
</dbReference>
<dbReference type="InterPro" id="IPR000717">
    <property type="entry name" value="PCI_dom"/>
</dbReference>
<dbReference type="InterPro" id="IPR011990">
    <property type="entry name" value="TPR-like_helical_dom_sf"/>
</dbReference>
<dbReference type="PANTHER" id="PTHR13242">
    <property type="entry name" value="EUKARYOTIC TRANSLATION INITIATION FACTOR 3"/>
    <property type="match status" value="1"/>
</dbReference>
<dbReference type="PANTHER" id="PTHR13242:SF0">
    <property type="entry name" value="EUKARYOTIC TRANSLATION INITIATION FACTOR 3 SUBUNIT L"/>
    <property type="match status" value="1"/>
</dbReference>
<dbReference type="Pfam" id="PF10255">
    <property type="entry name" value="Paf67"/>
    <property type="match status" value="1"/>
</dbReference>
<dbReference type="SUPFAM" id="SSF48452">
    <property type="entry name" value="TPR-like"/>
    <property type="match status" value="1"/>
</dbReference>
<dbReference type="PROSITE" id="PS50250">
    <property type="entry name" value="PCI"/>
    <property type="match status" value="1"/>
</dbReference>
<sequence length="539" mass="63687">MYSNEEPWEGGYDEYGYEMGMPEDGMYDRGYFPMHEDVKKFLMYFCTVIKDGVVYEIQNLYENTFPKLSEQHFEKKAWPSEEEVAHLVDNDNLFLILYKELYYRHLHARIQGGPSLEQRLNSFYNYCNFFNYILPSKEPVQLELPDIWLWELIDEFVYQFQNFAQYRARLTDKTDEEMDMLLNNNSKVWNILCILNVLHSLVSMSKIKDQLEAAAAGKDPEAVAGEFGRHSFYKMLGYFSLVGLLRVHSLLGDYHQAIKVLEPIEIHKKSQYSHIPSCQISTSYYVGFAYMMMRRYSDAIRTFSSILLYIQRTKQLYSARSYQNDQINKQTDQMYHLLAICLVLHPQCIDESIQQVLREKNYHDNMYKMQCGDLDVFRNFFVFACPKFVSPVPPPPDAPIEDYVKDALEHQINVFMDEVKQQQELPTIRSYLKLYTTLPIMKLASFMDRKPQDEVDEQKLENLLTRLLCFKHKMKNVVWTKGSSGLEGKFQSGSELDFYIDKDMIHIADTKVSHRYGDFFIRKVMKFEDLNRRLHAIKG</sequence>
<name>EIF3L_ANOGA</name>
<proteinExistence type="inferred from homology"/>
<keyword id="KW-0963">Cytoplasm</keyword>
<keyword id="KW-0396">Initiation factor</keyword>
<keyword id="KW-0648">Protein biosynthesis</keyword>
<keyword id="KW-1185">Reference proteome</keyword>